<feature type="chain" id="PRO_1000144279" description="Large ribosomal subunit protein uL14">
    <location>
        <begin position="1"/>
        <end position="132"/>
    </location>
</feature>
<dbReference type="EMBL" id="AM774415">
    <property type="protein sequence ID" value="CAP14235.1"/>
    <property type="molecule type" value="Genomic_DNA"/>
</dbReference>
<dbReference type="RefSeq" id="WP_010903244.1">
    <property type="nucleotide sequence ID" value="NC_010364.1"/>
</dbReference>
<dbReference type="SMR" id="B0R666"/>
<dbReference type="EnsemblBacteria" id="CAP14235">
    <property type="protein sequence ID" value="CAP14235"/>
    <property type="gene ID" value="OE_3402F"/>
</dbReference>
<dbReference type="KEGG" id="hsl:OE_3402F"/>
<dbReference type="HOGENOM" id="CLU_095071_3_0_2"/>
<dbReference type="PhylomeDB" id="B0R666"/>
<dbReference type="Proteomes" id="UP000001321">
    <property type="component" value="Chromosome"/>
</dbReference>
<dbReference type="GO" id="GO:0022625">
    <property type="term" value="C:cytosolic large ribosomal subunit"/>
    <property type="evidence" value="ECO:0007669"/>
    <property type="project" value="TreeGrafter"/>
</dbReference>
<dbReference type="GO" id="GO:0070180">
    <property type="term" value="F:large ribosomal subunit rRNA binding"/>
    <property type="evidence" value="ECO:0007669"/>
    <property type="project" value="TreeGrafter"/>
</dbReference>
<dbReference type="GO" id="GO:0003735">
    <property type="term" value="F:structural constituent of ribosome"/>
    <property type="evidence" value="ECO:0007669"/>
    <property type="project" value="InterPro"/>
</dbReference>
<dbReference type="GO" id="GO:0006412">
    <property type="term" value="P:translation"/>
    <property type="evidence" value="ECO:0007669"/>
    <property type="project" value="UniProtKB-UniRule"/>
</dbReference>
<dbReference type="CDD" id="cd00337">
    <property type="entry name" value="Ribosomal_uL14"/>
    <property type="match status" value="1"/>
</dbReference>
<dbReference type="FunFam" id="2.40.150.20:FF:000007">
    <property type="entry name" value="50S ribosomal protein L14"/>
    <property type="match status" value="1"/>
</dbReference>
<dbReference type="Gene3D" id="2.40.150.20">
    <property type="entry name" value="Ribosomal protein L14"/>
    <property type="match status" value="1"/>
</dbReference>
<dbReference type="HAMAP" id="MF_01367">
    <property type="entry name" value="Ribosomal_uL14"/>
    <property type="match status" value="1"/>
</dbReference>
<dbReference type="InterPro" id="IPR000218">
    <property type="entry name" value="Ribosomal_uL14"/>
</dbReference>
<dbReference type="InterPro" id="IPR019971">
    <property type="entry name" value="Ribosomal_uL14_arc"/>
</dbReference>
<dbReference type="InterPro" id="IPR019972">
    <property type="entry name" value="Ribosomal_uL14_CS"/>
</dbReference>
<dbReference type="InterPro" id="IPR036853">
    <property type="entry name" value="Ribosomal_uL14_sf"/>
</dbReference>
<dbReference type="NCBIfam" id="NF006344">
    <property type="entry name" value="PRK08571.1"/>
    <property type="match status" value="1"/>
</dbReference>
<dbReference type="NCBIfam" id="TIGR03673">
    <property type="entry name" value="uL14_arch"/>
    <property type="match status" value="1"/>
</dbReference>
<dbReference type="PANTHER" id="PTHR11761">
    <property type="entry name" value="50S/60S RIBOSOMAL PROTEIN L14/L23"/>
    <property type="match status" value="1"/>
</dbReference>
<dbReference type="PANTHER" id="PTHR11761:SF8">
    <property type="entry name" value="LARGE RIBOSOMAL SUBUNIT PROTEIN UL14"/>
    <property type="match status" value="1"/>
</dbReference>
<dbReference type="Pfam" id="PF00238">
    <property type="entry name" value="Ribosomal_L14"/>
    <property type="match status" value="1"/>
</dbReference>
<dbReference type="SMART" id="SM01374">
    <property type="entry name" value="Ribosomal_L14"/>
    <property type="match status" value="1"/>
</dbReference>
<dbReference type="SUPFAM" id="SSF50193">
    <property type="entry name" value="Ribosomal protein L14"/>
    <property type="match status" value="1"/>
</dbReference>
<dbReference type="PROSITE" id="PS00049">
    <property type="entry name" value="RIBOSOMAL_L14"/>
    <property type="match status" value="1"/>
</dbReference>
<organism>
    <name type="scientific">Halobacterium salinarum (strain ATCC 29341 / DSM 671 / R1)</name>
    <dbReference type="NCBI Taxonomy" id="478009"/>
    <lineage>
        <taxon>Archaea</taxon>
        <taxon>Methanobacteriati</taxon>
        <taxon>Methanobacteriota</taxon>
        <taxon>Stenosarchaea group</taxon>
        <taxon>Halobacteria</taxon>
        <taxon>Halobacteriales</taxon>
        <taxon>Halobacteriaceae</taxon>
        <taxon>Halobacterium</taxon>
        <taxon>Halobacterium salinarum NRC-34001</taxon>
    </lineage>
</organism>
<name>RL14_HALS3</name>
<comment type="function">
    <text evidence="1">Binds to 23S rRNA. Forms part of two intersubunit bridges in the 70S ribosome.</text>
</comment>
<comment type="subunit">
    <text evidence="1">Part of the 50S ribosomal subunit. Forms a cluster with proteins L3 and L24e, part of which may contact the 16S rRNA in 2 intersubunit bridges.</text>
</comment>
<comment type="similarity">
    <text evidence="1">Belongs to the universal ribosomal protein uL14 family.</text>
</comment>
<accession>B0R666</accession>
<proteinExistence type="inferred from homology"/>
<sequence>MEAIKADITQGLEKGSLITCADNTGARELKITSVMGYQGRKNRHPKAGLGDTITVSVTKGTPEMRRQVLEAVVVRQRKPIRRPDGTRVKFEDNAAVIIDDLGEPRGTEIKGPISREVAERYGTIASTATMIV</sequence>
<protein>
    <recommendedName>
        <fullName evidence="1">Large ribosomal subunit protein uL14</fullName>
    </recommendedName>
    <alternativeName>
        <fullName evidence="2">50S ribosomal protein L14</fullName>
    </alternativeName>
</protein>
<evidence type="ECO:0000255" key="1">
    <source>
        <dbReference type="HAMAP-Rule" id="MF_01367"/>
    </source>
</evidence>
<evidence type="ECO:0000305" key="2"/>
<gene>
    <name evidence="1" type="primary">rpl14</name>
    <name type="ordered locus">OE_3402F</name>
</gene>
<reference key="1">
    <citation type="journal article" date="2008" name="Genomics">
        <title>Evolution in the laboratory: the genome of Halobacterium salinarum strain R1 compared to that of strain NRC-1.</title>
        <authorList>
            <person name="Pfeiffer F."/>
            <person name="Schuster S.C."/>
            <person name="Broicher A."/>
            <person name="Falb M."/>
            <person name="Palm P."/>
            <person name="Rodewald K."/>
            <person name="Ruepp A."/>
            <person name="Soppa J."/>
            <person name="Tittor J."/>
            <person name="Oesterhelt D."/>
        </authorList>
    </citation>
    <scope>NUCLEOTIDE SEQUENCE [LARGE SCALE GENOMIC DNA]</scope>
    <source>
        <strain>ATCC 29341 / DSM 671 / R1</strain>
    </source>
</reference>
<keyword id="KW-0687">Ribonucleoprotein</keyword>
<keyword id="KW-0689">Ribosomal protein</keyword>
<keyword id="KW-0694">RNA-binding</keyword>
<keyword id="KW-0699">rRNA-binding</keyword>